<name>PANC_VIBPA</name>
<accession>Q87LV1</accession>
<sequence length="301" mass="33387">MQTFAEISAVRGHLKTFKREGRKIAFVPTMGNLHEGHLTLVRKAREYADIVVVSIFVNPMQFDRADDLNNYPRTLEEDLSKLTAEGVDVVFTPTPEIIYPEGLDKQTFVDVPGLSTILEGASRPGHFRGVTTIVNKLFNIVQPDVACFGEKDFQQLAVIRKMVDDLAMDIEIIGVPTVREMDGLAMSSRNGLLTLDERQRAPVLARTMRWISSAIRGGRDDYASIIEDANDQLRAAGLHPDEIFIRDARTLQVITPETTQAVILMSAFLGQARLIDNQTVDMVVESKDEAESNDGTAANAE</sequence>
<gene>
    <name evidence="1" type="primary">panC</name>
    <name type="ordered locus">VP2507</name>
</gene>
<reference key="1">
    <citation type="journal article" date="2003" name="Lancet">
        <title>Genome sequence of Vibrio parahaemolyticus: a pathogenic mechanism distinct from that of V. cholerae.</title>
        <authorList>
            <person name="Makino K."/>
            <person name="Oshima K."/>
            <person name="Kurokawa K."/>
            <person name="Yokoyama K."/>
            <person name="Uda T."/>
            <person name="Tagomori K."/>
            <person name="Iijima Y."/>
            <person name="Najima M."/>
            <person name="Nakano M."/>
            <person name="Yamashita A."/>
            <person name="Kubota Y."/>
            <person name="Kimura S."/>
            <person name="Yasunaga T."/>
            <person name="Honda T."/>
            <person name="Shinagawa H."/>
            <person name="Hattori M."/>
            <person name="Iida T."/>
        </authorList>
    </citation>
    <scope>NUCLEOTIDE SEQUENCE [LARGE SCALE GENOMIC DNA]</scope>
    <source>
        <strain>RIMD 2210633</strain>
    </source>
</reference>
<comment type="function">
    <text evidence="1">Catalyzes the condensation of pantoate with beta-alanine in an ATP-dependent reaction via a pantoyl-adenylate intermediate.</text>
</comment>
<comment type="catalytic activity">
    <reaction evidence="1">
        <text>(R)-pantoate + beta-alanine + ATP = (R)-pantothenate + AMP + diphosphate + H(+)</text>
        <dbReference type="Rhea" id="RHEA:10912"/>
        <dbReference type="ChEBI" id="CHEBI:15378"/>
        <dbReference type="ChEBI" id="CHEBI:15980"/>
        <dbReference type="ChEBI" id="CHEBI:29032"/>
        <dbReference type="ChEBI" id="CHEBI:30616"/>
        <dbReference type="ChEBI" id="CHEBI:33019"/>
        <dbReference type="ChEBI" id="CHEBI:57966"/>
        <dbReference type="ChEBI" id="CHEBI:456215"/>
        <dbReference type="EC" id="6.3.2.1"/>
    </reaction>
</comment>
<comment type="pathway">
    <text evidence="1">Cofactor biosynthesis; (R)-pantothenate biosynthesis; (R)-pantothenate from (R)-pantoate and beta-alanine: step 1/1.</text>
</comment>
<comment type="subunit">
    <text evidence="1">Homodimer.</text>
</comment>
<comment type="subcellular location">
    <subcellularLocation>
        <location evidence="1">Cytoplasm</location>
    </subcellularLocation>
</comment>
<comment type="miscellaneous">
    <text evidence="1">The reaction proceeds by a bi uni uni bi ping pong mechanism.</text>
</comment>
<comment type="similarity">
    <text evidence="1">Belongs to the pantothenate synthetase family.</text>
</comment>
<evidence type="ECO:0000255" key="1">
    <source>
        <dbReference type="HAMAP-Rule" id="MF_00158"/>
    </source>
</evidence>
<keyword id="KW-0067">ATP-binding</keyword>
<keyword id="KW-0963">Cytoplasm</keyword>
<keyword id="KW-0436">Ligase</keyword>
<keyword id="KW-0547">Nucleotide-binding</keyword>
<keyword id="KW-0566">Pantothenate biosynthesis</keyword>
<protein>
    <recommendedName>
        <fullName evidence="1">Pantothenate synthetase</fullName>
        <shortName evidence="1">PS</shortName>
        <ecNumber evidence="1">6.3.2.1</ecNumber>
    </recommendedName>
    <alternativeName>
        <fullName evidence="1">Pantoate--beta-alanine ligase</fullName>
    </alternativeName>
    <alternativeName>
        <fullName evidence="1">Pantoate-activating enzyme</fullName>
    </alternativeName>
</protein>
<proteinExistence type="inferred from homology"/>
<feature type="chain" id="PRO_0000128286" description="Pantothenate synthetase">
    <location>
        <begin position="1"/>
        <end position="301"/>
    </location>
</feature>
<feature type="active site" description="Proton donor" evidence="1">
    <location>
        <position position="37"/>
    </location>
</feature>
<feature type="binding site" evidence="1">
    <location>
        <begin position="30"/>
        <end position="37"/>
    </location>
    <ligand>
        <name>ATP</name>
        <dbReference type="ChEBI" id="CHEBI:30616"/>
    </ligand>
</feature>
<feature type="binding site" evidence="1">
    <location>
        <position position="61"/>
    </location>
    <ligand>
        <name>(R)-pantoate</name>
        <dbReference type="ChEBI" id="CHEBI:15980"/>
    </ligand>
</feature>
<feature type="binding site" evidence="1">
    <location>
        <position position="61"/>
    </location>
    <ligand>
        <name>beta-alanine</name>
        <dbReference type="ChEBI" id="CHEBI:57966"/>
    </ligand>
</feature>
<feature type="binding site" evidence="1">
    <location>
        <begin position="149"/>
        <end position="152"/>
    </location>
    <ligand>
        <name>ATP</name>
        <dbReference type="ChEBI" id="CHEBI:30616"/>
    </ligand>
</feature>
<feature type="binding site" evidence="1">
    <location>
        <position position="155"/>
    </location>
    <ligand>
        <name>(R)-pantoate</name>
        <dbReference type="ChEBI" id="CHEBI:15980"/>
    </ligand>
</feature>
<feature type="binding site" evidence="1">
    <location>
        <position position="178"/>
    </location>
    <ligand>
        <name>ATP</name>
        <dbReference type="ChEBI" id="CHEBI:30616"/>
    </ligand>
</feature>
<feature type="binding site" evidence="1">
    <location>
        <begin position="186"/>
        <end position="189"/>
    </location>
    <ligand>
        <name>ATP</name>
        <dbReference type="ChEBI" id="CHEBI:30616"/>
    </ligand>
</feature>
<dbReference type="EC" id="6.3.2.1" evidence="1"/>
<dbReference type="EMBL" id="BA000031">
    <property type="protein sequence ID" value="BAC60770.1"/>
    <property type="molecule type" value="Genomic_DNA"/>
</dbReference>
<dbReference type="RefSeq" id="NP_798886.1">
    <property type="nucleotide sequence ID" value="NC_004603.1"/>
</dbReference>
<dbReference type="RefSeq" id="WP_005454448.1">
    <property type="nucleotide sequence ID" value="NC_004603.1"/>
</dbReference>
<dbReference type="SMR" id="Q87LV1"/>
<dbReference type="GeneID" id="1190022"/>
<dbReference type="KEGG" id="vpa:VP2507"/>
<dbReference type="PATRIC" id="fig|223926.6.peg.2406"/>
<dbReference type="eggNOG" id="COG0414">
    <property type="taxonomic scope" value="Bacteria"/>
</dbReference>
<dbReference type="HOGENOM" id="CLU_047148_0_0_6"/>
<dbReference type="UniPathway" id="UPA00028">
    <property type="reaction ID" value="UER00005"/>
</dbReference>
<dbReference type="Proteomes" id="UP000002493">
    <property type="component" value="Chromosome 1"/>
</dbReference>
<dbReference type="GO" id="GO:0005829">
    <property type="term" value="C:cytosol"/>
    <property type="evidence" value="ECO:0007669"/>
    <property type="project" value="TreeGrafter"/>
</dbReference>
<dbReference type="GO" id="GO:0005524">
    <property type="term" value="F:ATP binding"/>
    <property type="evidence" value="ECO:0007669"/>
    <property type="project" value="UniProtKB-KW"/>
</dbReference>
<dbReference type="GO" id="GO:0004592">
    <property type="term" value="F:pantoate-beta-alanine ligase activity"/>
    <property type="evidence" value="ECO:0007669"/>
    <property type="project" value="UniProtKB-UniRule"/>
</dbReference>
<dbReference type="GO" id="GO:0015940">
    <property type="term" value="P:pantothenate biosynthetic process"/>
    <property type="evidence" value="ECO:0007669"/>
    <property type="project" value="UniProtKB-UniRule"/>
</dbReference>
<dbReference type="CDD" id="cd00560">
    <property type="entry name" value="PanC"/>
    <property type="match status" value="1"/>
</dbReference>
<dbReference type="FunFam" id="3.40.50.620:FF:000013">
    <property type="entry name" value="Pantothenate synthetase"/>
    <property type="match status" value="1"/>
</dbReference>
<dbReference type="Gene3D" id="3.40.50.620">
    <property type="entry name" value="HUPs"/>
    <property type="match status" value="1"/>
</dbReference>
<dbReference type="Gene3D" id="3.30.1300.10">
    <property type="entry name" value="Pantoate-beta-alanine ligase, C-terminal domain"/>
    <property type="match status" value="1"/>
</dbReference>
<dbReference type="HAMAP" id="MF_00158">
    <property type="entry name" value="PanC"/>
    <property type="match status" value="1"/>
</dbReference>
<dbReference type="InterPro" id="IPR004821">
    <property type="entry name" value="Cyt_trans-like"/>
</dbReference>
<dbReference type="InterPro" id="IPR003721">
    <property type="entry name" value="Pantoate_ligase"/>
</dbReference>
<dbReference type="InterPro" id="IPR042176">
    <property type="entry name" value="Pantoate_ligase_C"/>
</dbReference>
<dbReference type="InterPro" id="IPR014729">
    <property type="entry name" value="Rossmann-like_a/b/a_fold"/>
</dbReference>
<dbReference type="NCBIfam" id="TIGR00125">
    <property type="entry name" value="cyt_tran_rel"/>
    <property type="match status" value="1"/>
</dbReference>
<dbReference type="NCBIfam" id="TIGR00018">
    <property type="entry name" value="panC"/>
    <property type="match status" value="1"/>
</dbReference>
<dbReference type="PANTHER" id="PTHR21299">
    <property type="entry name" value="CYTIDYLATE KINASE/PANTOATE-BETA-ALANINE LIGASE"/>
    <property type="match status" value="1"/>
</dbReference>
<dbReference type="PANTHER" id="PTHR21299:SF1">
    <property type="entry name" value="PANTOATE--BETA-ALANINE LIGASE"/>
    <property type="match status" value="1"/>
</dbReference>
<dbReference type="Pfam" id="PF02569">
    <property type="entry name" value="Pantoate_ligase"/>
    <property type="match status" value="1"/>
</dbReference>
<dbReference type="SUPFAM" id="SSF52374">
    <property type="entry name" value="Nucleotidylyl transferase"/>
    <property type="match status" value="1"/>
</dbReference>
<organism>
    <name type="scientific">Vibrio parahaemolyticus serotype O3:K6 (strain RIMD 2210633)</name>
    <dbReference type="NCBI Taxonomy" id="223926"/>
    <lineage>
        <taxon>Bacteria</taxon>
        <taxon>Pseudomonadati</taxon>
        <taxon>Pseudomonadota</taxon>
        <taxon>Gammaproteobacteria</taxon>
        <taxon>Vibrionales</taxon>
        <taxon>Vibrionaceae</taxon>
        <taxon>Vibrio</taxon>
    </lineage>
</organism>